<keyword id="KW-0349">Heme</keyword>
<keyword id="KW-0408">Iron</keyword>
<keyword id="KW-0472">Membrane</keyword>
<keyword id="KW-0479">Metal-binding</keyword>
<keyword id="KW-0503">Monooxygenase</keyword>
<keyword id="KW-0560">Oxidoreductase</keyword>
<proteinExistence type="evidence at transcript level"/>
<organism>
    <name type="scientific">Candida maltosa</name>
    <name type="common">Yeast</name>
    <dbReference type="NCBI Taxonomy" id="5479"/>
    <lineage>
        <taxon>Eukaryota</taxon>
        <taxon>Fungi</taxon>
        <taxon>Dikarya</taxon>
        <taxon>Ascomycota</taxon>
        <taxon>Saccharomycotina</taxon>
        <taxon>Pichiomycetes</taxon>
        <taxon>Debaryomycetaceae</taxon>
        <taxon>Candida/Lodderomyces clade</taxon>
        <taxon>Candida</taxon>
    </lineage>
</organism>
<feature type="chain" id="PRO_0000052028" description="Cytochrome P450 52A10">
    <location>
        <begin position="1"/>
        <end position="519"/>
    </location>
</feature>
<feature type="binding site" description="axial binding residue" evidence="1">
    <location>
        <position position="466"/>
    </location>
    <ligand>
        <name>heme</name>
        <dbReference type="ChEBI" id="CHEBI:30413"/>
    </ligand>
    <ligandPart>
        <name>Fe</name>
        <dbReference type="ChEBI" id="CHEBI:18248"/>
    </ligandPart>
</feature>
<name>CP52J_CANMA</name>
<evidence type="ECO:0000250" key="1"/>
<evidence type="ECO:0000305" key="2"/>
<sequence>MIFTAFILDYWYFTLLFLIAAYFIGKHVYTNYLMRKHHAEPILDVVDDGAFGFKFGFQSLKAKKIGNQIDLLFLKFNEAKHPSIGTFVTRSFGMQFIATKDPENIKAMLATQFNEYTLGQRLNFLAPLLGKGIFTLDGNGWKHSRAMLRPQFSRDQIGHVKMLEPHFQLLKKHIIKNKGTFFDIQELFFRFTVDSATEFLFGESVSSLKDESIGYDQEEIDFAGRKDFAEAFNKSQVYLSTRTLLQLLYWLVNSADFKRCNKIVHKFSDYYIKKALTATPEELEKHSSYIFLYELAKQTRDPIVLRDQSLNILLAGRDTTAGLLSFAVFELGRNPEVWSKLRQEIGHKFGLDSYSRVEDISFELLKLCEYLKAVLNETLRLYPSVPRNARFAAKNTTLPHGGGPDGMSPILVRKGQTVMYSVYALQRDEKYYGKDANEFRPERWFEPEVRKLGWAFLPFNGGPRICLGQQFALTEASYVLARLIQSFETLELSPEAAYPPAKLSHLTMCLFDGTPVRFE</sequence>
<protein>
    <recommendedName>
        <fullName>Cytochrome P450 52A10</fullName>
        <ecNumber>1.14.14.-</ecNumber>
    </recommendedName>
    <alternativeName>
        <fullName>Alkane-inducible P450-ALK7</fullName>
    </alternativeName>
    <alternativeName>
        <fullName>CYPLIIA10</fullName>
    </alternativeName>
</protein>
<comment type="function">
    <text>Together with an NADPH cytochrome P450 the enzyme system catalyzes the terminal hydroxylation as the first step in the assimilation of alkanes and fatty acids.</text>
</comment>
<comment type="cofactor">
    <cofactor evidence="1">
        <name>heme</name>
        <dbReference type="ChEBI" id="CHEBI:30413"/>
    </cofactor>
</comment>
<comment type="subcellular location">
    <subcellularLocation>
        <location evidence="2">Membrane</location>
    </subcellularLocation>
</comment>
<comment type="induction">
    <text>By N-alkanes.</text>
</comment>
<comment type="similarity">
    <text evidence="2">Belongs to the cytochrome P450 family.</text>
</comment>
<reference key="1">
    <citation type="journal article" date="1995" name="DNA Cell Biol.">
        <title>CYP52 (cytochrome P450alk) multigene family in Candida maltosa: identification and characterization of eight members.</title>
        <authorList>
            <person name="Ohkuma M."/>
            <person name="Muraoka S."/>
            <person name="Tanimoto T."/>
            <person name="Fujii M."/>
            <person name="Ohta A."/>
            <person name="Takagi M."/>
        </authorList>
    </citation>
    <scope>NUCLEOTIDE SEQUENCE [GENOMIC DNA]</scope>
    <source>
        <strain>ATCC 28140 / CBS 5611 / IAM 12247 / JCM 1504 / NBRC 1977</strain>
    </source>
</reference>
<dbReference type="EC" id="1.14.14.-"/>
<dbReference type="EMBL" id="D12719">
    <property type="protein sequence ID" value="BAA02213.1"/>
    <property type="molecule type" value="Genomic_DNA"/>
</dbReference>
<dbReference type="PIR" id="JS0725">
    <property type="entry name" value="JS0725"/>
</dbReference>
<dbReference type="SMR" id="Q12588"/>
<dbReference type="GO" id="GO:0016020">
    <property type="term" value="C:membrane"/>
    <property type="evidence" value="ECO:0007669"/>
    <property type="project" value="UniProtKB-SubCell"/>
</dbReference>
<dbReference type="GO" id="GO:0020037">
    <property type="term" value="F:heme binding"/>
    <property type="evidence" value="ECO:0007669"/>
    <property type="project" value="InterPro"/>
</dbReference>
<dbReference type="GO" id="GO:0005506">
    <property type="term" value="F:iron ion binding"/>
    <property type="evidence" value="ECO:0007669"/>
    <property type="project" value="InterPro"/>
</dbReference>
<dbReference type="GO" id="GO:0016712">
    <property type="term" value="F:oxidoreductase activity, acting on paired donors, with incorporation or reduction of molecular oxygen, reduced flavin or flavoprotein as one donor, and incorporation of one atom of oxygen"/>
    <property type="evidence" value="ECO:0007669"/>
    <property type="project" value="InterPro"/>
</dbReference>
<dbReference type="CDD" id="cd11063">
    <property type="entry name" value="CYP52"/>
    <property type="match status" value="1"/>
</dbReference>
<dbReference type="Gene3D" id="1.10.630.10">
    <property type="entry name" value="Cytochrome P450"/>
    <property type="match status" value="1"/>
</dbReference>
<dbReference type="InterPro" id="IPR001128">
    <property type="entry name" value="Cyt_P450"/>
</dbReference>
<dbReference type="InterPro" id="IPR017972">
    <property type="entry name" value="Cyt_P450_CS"/>
</dbReference>
<dbReference type="InterPro" id="IPR002974">
    <property type="entry name" value="Cyt_P450_E_CYP52_ascomycetes"/>
</dbReference>
<dbReference type="InterPro" id="IPR047146">
    <property type="entry name" value="Cyt_P450_E_CYP52_fungi"/>
</dbReference>
<dbReference type="InterPro" id="IPR002402">
    <property type="entry name" value="Cyt_P450_E_grp-II"/>
</dbReference>
<dbReference type="InterPro" id="IPR036396">
    <property type="entry name" value="Cyt_P450_sf"/>
</dbReference>
<dbReference type="PANTHER" id="PTHR24287">
    <property type="entry name" value="P450, PUTATIVE (EUROFUNG)-RELATED"/>
    <property type="match status" value="1"/>
</dbReference>
<dbReference type="PANTHER" id="PTHR24287:SF1">
    <property type="entry name" value="P450, PUTATIVE (EUROFUNG)-RELATED"/>
    <property type="match status" value="1"/>
</dbReference>
<dbReference type="Pfam" id="PF00067">
    <property type="entry name" value="p450"/>
    <property type="match status" value="1"/>
</dbReference>
<dbReference type="PRINTS" id="PR00464">
    <property type="entry name" value="EP450II"/>
</dbReference>
<dbReference type="PRINTS" id="PR01239">
    <property type="entry name" value="EP450IICYP52"/>
</dbReference>
<dbReference type="PRINTS" id="PR00385">
    <property type="entry name" value="P450"/>
</dbReference>
<dbReference type="SUPFAM" id="SSF48264">
    <property type="entry name" value="Cytochrome P450"/>
    <property type="match status" value="1"/>
</dbReference>
<dbReference type="PROSITE" id="PS00086">
    <property type="entry name" value="CYTOCHROME_P450"/>
    <property type="match status" value="1"/>
</dbReference>
<gene>
    <name type="primary">CYP52A10</name>
</gene>
<accession>Q12588</accession>